<evidence type="ECO:0000250" key="1"/>
<evidence type="ECO:0000255" key="2"/>
<dbReference type="EMBL" id="Z70305">
    <property type="protein sequence ID" value="CAA94320.1"/>
    <property type="molecule type" value="Genomic_DNA"/>
</dbReference>
<dbReference type="SMR" id="Q52825"/>
<dbReference type="GO" id="GO:0042597">
    <property type="term" value="C:periplasmic space"/>
    <property type="evidence" value="ECO:0007669"/>
    <property type="project" value="UniProtKB-SubCell"/>
</dbReference>
<dbReference type="GO" id="GO:0005507">
    <property type="term" value="F:copper ion binding"/>
    <property type="evidence" value="ECO:0007669"/>
    <property type="project" value="InterPro"/>
</dbReference>
<dbReference type="GO" id="GO:0009055">
    <property type="term" value="F:electron transfer activity"/>
    <property type="evidence" value="ECO:0007669"/>
    <property type="project" value="InterPro"/>
</dbReference>
<dbReference type="CDD" id="cd04218">
    <property type="entry name" value="Pseudoazurin"/>
    <property type="match status" value="1"/>
</dbReference>
<dbReference type="Gene3D" id="2.60.40.420">
    <property type="entry name" value="Cupredoxins - blue copper proteins"/>
    <property type="match status" value="1"/>
</dbReference>
<dbReference type="InterPro" id="IPR002386">
    <property type="entry name" value="Amicyanin/Pseudoazurin"/>
</dbReference>
<dbReference type="InterPro" id="IPR000923">
    <property type="entry name" value="BlueCu_1"/>
</dbReference>
<dbReference type="InterPro" id="IPR001235">
    <property type="entry name" value="Copper_blue_Plastocyanin"/>
</dbReference>
<dbReference type="InterPro" id="IPR008972">
    <property type="entry name" value="Cupredoxin"/>
</dbReference>
<dbReference type="InterPro" id="IPR012745">
    <property type="entry name" value="Pseudoazurin"/>
</dbReference>
<dbReference type="NCBIfam" id="TIGR02375">
    <property type="entry name" value="pseudoazurin"/>
    <property type="match status" value="1"/>
</dbReference>
<dbReference type="Pfam" id="PF00127">
    <property type="entry name" value="Copper-bind"/>
    <property type="match status" value="1"/>
</dbReference>
<dbReference type="PRINTS" id="PR00155">
    <property type="entry name" value="AMICYANIN"/>
</dbReference>
<dbReference type="PRINTS" id="PR00156">
    <property type="entry name" value="COPPERBLUE"/>
</dbReference>
<dbReference type="SUPFAM" id="SSF49503">
    <property type="entry name" value="Cupredoxins"/>
    <property type="match status" value="1"/>
</dbReference>
<keyword id="KW-0186">Copper</keyword>
<keyword id="KW-0249">Electron transport</keyword>
<keyword id="KW-0479">Metal-binding</keyword>
<keyword id="KW-0574">Periplasm</keyword>
<keyword id="KW-0732">Signal</keyword>
<keyword id="KW-0813">Transport</keyword>
<accession>Q52825</accession>
<reference key="1">
    <citation type="journal article" date="1996" name="Mol. Microbiol.">
        <title>Rhizobium leguminosarum bv. viciae contains a second fnr/fixK-like gene and an unusual fixL homologue.</title>
        <authorList>
            <person name="Patschkowski T."/>
            <person name="Schlueter A."/>
            <person name="Priefer U."/>
        </authorList>
    </citation>
    <scope>NUCLEOTIDE SEQUENCE [GENOMIC DNA]</scope>
    <source>
        <strain>VF39</strain>
    </source>
</reference>
<protein>
    <recommendedName>
        <fullName>Putative pseudoazurin</fullName>
    </recommendedName>
    <alternativeName>
        <fullName>Blue copper protein</fullName>
    </alternativeName>
</protein>
<name>AZUP_RHILV</name>
<proteinExistence type="inferred from homology"/>
<comment type="function">
    <text evidence="1">This soluble electron transfer copper protein is required for the inactivation of copper-containing nitrite reductase in the presence of oxygen.</text>
</comment>
<comment type="cofactor">
    <cofactor>
        <name>Cu cation</name>
        <dbReference type="ChEBI" id="CHEBI:23378"/>
    </cofactor>
    <text>Binds 1 copper ion per subunit.</text>
</comment>
<comment type="subcellular location">
    <subcellularLocation>
        <location evidence="1">Periplasm</location>
    </subcellularLocation>
</comment>
<comment type="miscellaneous">
    <text>In R.leguminosarum (biovar viciae) pseudoazurin is dispensable for nitrogen fixation.</text>
</comment>
<feature type="signal peptide" evidence="2">
    <location>
        <begin position="1"/>
        <end position="23"/>
    </location>
</feature>
<feature type="chain" id="PRO_0000002852" description="Putative pseudoazurin">
    <location>
        <begin position="24"/>
        <end position="152"/>
    </location>
</feature>
<feature type="domain" description="Plastocyanin-like">
    <location>
        <begin position="28"/>
        <end position="116"/>
    </location>
</feature>
<feature type="binding site" evidence="1">
    <location>
        <position position="63"/>
    </location>
    <ligand>
        <name>Cu cation</name>
        <dbReference type="ChEBI" id="CHEBI:23378"/>
    </ligand>
</feature>
<feature type="binding site" evidence="1">
    <location>
        <position position="101"/>
    </location>
    <ligand>
        <name>Cu cation</name>
        <dbReference type="ChEBI" id="CHEBI:23378"/>
    </ligand>
</feature>
<feature type="binding site" evidence="1">
    <location>
        <position position="104"/>
    </location>
    <ligand>
        <name>Cu cation</name>
        <dbReference type="ChEBI" id="CHEBI:23378"/>
    </ligand>
</feature>
<feature type="binding site" evidence="1">
    <location>
        <position position="109"/>
    </location>
    <ligand>
        <name>Cu cation</name>
        <dbReference type="ChEBI" id="CHEBI:23378"/>
    </ligand>
</feature>
<sequence>MPLKFGLIVATAALIASAASLMAADHQVQMLNKGTDGAMVFEPGFLKIAPGDTVTFIPTDKSHNVETFKGLIPDGVPDFKSKPNEQYQVKFDIPGAYVLKCTPHVGMGMVALIQVGDNPANLEPIKIAKVPNMVRKRLDADLAQITPAQITQ</sequence>
<gene>
    <name type="primary">azu</name>
</gene>
<organism>
    <name type="scientific">Rhizobium leguminosarum bv. viciae</name>
    <dbReference type="NCBI Taxonomy" id="387"/>
    <lineage>
        <taxon>Bacteria</taxon>
        <taxon>Pseudomonadati</taxon>
        <taxon>Pseudomonadota</taxon>
        <taxon>Alphaproteobacteria</taxon>
        <taxon>Hyphomicrobiales</taxon>
        <taxon>Rhizobiaceae</taxon>
        <taxon>Rhizobium/Agrobacterium group</taxon>
        <taxon>Rhizobium</taxon>
    </lineage>
</organism>